<name>KHSE_PROM5</name>
<evidence type="ECO:0000255" key="1">
    <source>
        <dbReference type="HAMAP-Rule" id="MF_00384"/>
    </source>
</evidence>
<accession>A2BVQ8</accession>
<comment type="function">
    <text evidence="1">Catalyzes the ATP-dependent phosphorylation of L-homoserine to L-homoserine phosphate.</text>
</comment>
<comment type="catalytic activity">
    <reaction evidence="1">
        <text>L-homoserine + ATP = O-phospho-L-homoserine + ADP + H(+)</text>
        <dbReference type="Rhea" id="RHEA:13985"/>
        <dbReference type="ChEBI" id="CHEBI:15378"/>
        <dbReference type="ChEBI" id="CHEBI:30616"/>
        <dbReference type="ChEBI" id="CHEBI:57476"/>
        <dbReference type="ChEBI" id="CHEBI:57590"/>
        <dbReference type="ChEBI" id="CHEBI:456216"/>
        <dbReference type="EC" id="2.7.1.39"/>
    </reaction>
</comment>
<comment type="pathway">
    <text evidence="1">Amino-acid biosynthesis; L-threonine biosynthesis; L-threonine from L-aspartate: step 4/5.</text>
</comment>
<comment type="subcellular location">
    <subcellularLocation>
        <location evidence="1">Cytoplasm</location>
    </subcellularLocation>
</comment>
<comment type="similarity">
    <text evidence="1">Belongs to the GHMP kinase family. Homoserine kinase subfamily.</text>
</comment>
<feature type="chain" id="PRO_1000049158" description="Homoserine kinase">
    <location>
        <begin position="1"/>
        <end position="315"/>
    </location>
</feature>
<feature type="binding site" evidence="1">
    <location>
        <begin position="97"/>
        <end position="107"/>
    </location>
    <ligand>
        <name>ATP</name>
        <dbReference type="ChEBI" id="CHEBI:30616"/>
    </ligand>
</feature>
<proteinExistence type="inferred from homology"/>
<sequence length="315" mass="33544">MSIPNLGKKIIVTVPSTTANLGPGFDCLGAALDLYNEFIFTRIEGDGDRFDLIMESTDGNHLRGGPENLVFRAAQKVWESADVSPFALEARVKLAVPPARGLGSSATAIVAGLIGANAIMNSPLPKEKLLELAIDIEGHPDNVVPSLLGGLCLTARSSSQRWRIIRCDWHDSIKAVIAIPAIRLSTSEARRVMPKNIPISDAVTNMGALTLLLNGLKTGNDELIKEGMFDKLHEPYRWKLIKGGLEVKEAALQAGALGCAISGAGPSILALCKSNNGKVVSQAMVKAWENLGIASRAPFLNVQTKGSQFKTISGK</sequence>
<reference key="1">
    <citation type="journal article" date="2007" name="PLoS Genet.">
        <title>Patterns and implications of gene gain and loss in the evolution of Prochlorococcus.</title>
        <authorList>
            <person name="Kettler G.C."/>
            <person name="Martiny A.C."/>
            <person name="Huang K."/>
            <person name="Zucker J."/>
            <person name="Coleman M.L."/>
            <person name="Rodrigue S."/>
            <person name="Chen F."/>
            <person name="Lapidus A."/>
            <person name="Ferriera S."/>
            <person name="Johnson J."/>
            <person name="Steglich C."/>
            <person name="Church G.M."/>
            <person name="Richardson P."/>
            <person name="Chisholm S.W."/>
        </authorList>
    </citation>
    <scope>NUCLEOTIDE SEQUENCE [LARGE SCALE GENOMIC DNA]</scope>
    <source>
        <strain>MIT 9515</strain>
    </source>
</reference>
<gene>
    <name evidence="1" type="primary">thrB</name>
    <name type="ordered locus">P9515_06601</name>
</gene>
<keyword id="KW-0028">Amino-acid biosynthesis</keyword>
<keyword id="KW-0067">ATP-binding</keyword>
<keyword id="KW-0963">Cytoplasm</keyword>
<keyword id="KW-0418">Kinase</keyword>
<keyword id="KW-0547">Nucleotide-binding</keyword>
<keyword id="KW-0791">Threonine biosynthesis</keyword>
<keyword id="KW-0808">Transferase</keyword>
<protein>
    <recommendedName>
        <fullName evidence="1">Homoserine kinase</fullName>
        <shortName evidence="1">HK</shortName>
        <shortName evidence="1">HSK</shortName>
        <ecNumber evidence="1">2.7.1.39</ecNumber>
    </recommendedName>
</protein>
<dbReference type="EC" id="2.7.1.39" evidence="1"/>
<dbReference type="EMBL" id="CP000552">
    <property type="protein sequence ID" value="ABM71869.1"/>
    <property type="molecule type" value="Genomic_DNA"/>
</dbReference>
<dbReference type="RefSeq" id="WP_011819974.1">
    <property type="nucleotide sequence ID" value="NC_008817.1"/>
</dbReference>
<dbReference type="SMR" id="A2BVQ8"/>
<dbReference type="STRING" id="167542.P9515_06601"/>
<dbReference type="GeneID" id="60200599"/>
<dbReference type="KEGG" id="pmc:P9515_06601"/>
<dbReference type="eggNOG" id="COG0083">
    <property type="taxonomic scope" value="Bacteria"/>
</dbReference>
<dbReference type="HOGENOM" id="CLU_041243_0_2_3"/>
<dbReference type="OrthoDB" id="9769912at2"/>
<dbReference type="UniPathway" id="UPA00050">
    <property type="reaction ID" value="UER00064"/>
</dbReference>
<dbReference type="Proteomes" id="UP000001589">
    <property type="component" value="Chromosome"/>
</dbReference>
<dbReference type="GO" id="GO:0005737">
    <property type="term" value="C:cytoplasm"/>
    <property type="evidence" value="ECO:0007669"/>
    <property type="project" value="UniProtKB-SubCell"/>
</dbReference>
<dbReference type="GO" id="GO:0005524">
    <property type="term" value="F:ATP binding"/>
    <property type="evidence" value="ECO:0007669"/>
    <property type="project" value="UniProtKB-UniRule"/>
</dbReference>
<dbReference type="GO" id="GO:0004413">
    <property type="term" value="F:homoserine kinase activity"/>
    <property type="evidence" value="ECO:0007669"/>
    <property type="project" value="UniProtKB-UniRule"/>
</dbReference>
<dbReference type="GO" id="GO:0009088">
    <property type="term" value="P:threonine biosynthetic process"/>
    <property type="evidence" value="ECO:0007669"/>
    <property type="project" value="UniProtKB-UniRule"/>
</dbReference>
<dbReference type="Gene3D" id="3.30.230.10">
    <property type="match status" value="1"/>
</dbReference>
<dbReference type="Gene3D" id="3.30.70.890">
    <property type="entry name" value="GHMP kinase, C-terminal domain"/>
    <property type="match status" value="1"/>
</dbReference>
<dbReference type="HAMAP" id="MF_00384">
    <property type="entry name" value="Homoser_kinase"/>
    <property type="match status" value="1"/>
</dbReference>
<dbReference type="InterPro" id="IPR013750">
    <property type="entry name" value="GHMP_kinase_C_dom"/>
</dbReference>
<dbReference type="InterPro" id="IPR036554">
    <property type="entry name" value="GHMP_kinase_C_sf"/>
</dbReference>
<dbReference type="InterPro" id="IPR006204">
    <property type="entry name" value="GHMP_kinase_N_dom"/>
</dbReference>
<dbReference type="InterPro" id="IPR006203">
    <property type="entry name" value="GHMP_knse_ATP-bd_CS"/>
</dbReference>
<dbReference type="InterPro" id="IPR000870">
    <property type="entry name" value="Homoserine_kinase"/>
</dbReference>
<dbReference type="InterPro" id="IPR020568">
    <property type="entry name" value="Ribosomal_Su5_D2-typ_SF"/>
</dbReference>
<dbReference type="InterPro" id="IPR014721">
    <property type="entry name" value="Ribsml_uS5_D2-typ_fold_subgr"/>
</dbReference>
<dbReference type="NCBIfam" id="NF002288">
    <property type="entry name" value="PRK01212.1-4"/>
    <property type="match status" value="1"/>
</dbReference>
<dbReference type="NCBIfam" id="TIGR00191">
    <property type="entry name" value="thrB"/>
    <property type="match status" value="1"/>
</dbReference>
<dbReference type="PANTHER" id="PTHR20861:SF1">
    <property type="entry name" value="HOMOSERINE KINASE"/>
    <property type="match status" value="1"/>
</dbReference>
<dbReference type="PANTHER" id="PTHR20861">
    <property type="entry name" value="HOMOSERINE/4-DIPHOSPHOCYTIDYL-2-C-METHYL-D-ERYTHRITOL KINASE"/>
    <property type="match status" value="1"/>
</dbReference>
<dbReference type="Pfam" id="PF08544">
    <property type="entry name" value="GHMP_kinases_C"/>
    <property type="match status" value="1"/>
</dbReference>
<dbReference type="Pfam" id="PF00288">
    <property type="entry name" value="GHMP_kinases_N"/>
    <property type="match status" value="1"/>
</dbReference>
<dbReference type="PIRSF" id="PIRSF000676">
    <property type="entry name" value="Homoser_kin"/>
    <property type="match status" value="1"/>
</dbReference>
<dbReference type="PRINTS" id="PR00958">
    <property type="entry name" value="HOMSERKINASE"/>
</dbReference>
<dbReference type="SUPFAM" id="SSF55060">
    <property type="entry name" value="GHMP Kinase, C-terminal domain"/>
    <property type="match status" value="1"/>
</dbReference>
<dbReference type="SUPFAM" id="SSF54211">
    <property type="entry name" value="Ribosomal protein S5 domain 2-like"/>
    <property type="match status" value="1"/>
</dbReference>
<dbReference type="PROSITE" id="PS00627">
    <property type="entry name" value="GHMP_KINASES_ATP"/>
    <property type="match status" value="1"/>
</dbReference>
<organism>
    <name type="scientific">Prochlorococcus marinus (strain MIT 9515)</name>
    <dbReference type="NCBI Taxonomy" id="167542"/>
    <lineage>
        <taxon>Bacteria</taxon>
        <taxon>Bacillati</taxon>
        <taxon>Cyanobacteriota</taxon>
        <taxon>Cyanophyceae</taxon>
        <taxon>Synechococcales</taxon>
        <taxon>Prochlorococcaceae</taxon>
        <taxon>Prochlorococcus</taxon>
    </lineage>
</organism>